<sequence>MRSEKHLPPLPLLLAICCLGTLHPSSGFPQSVPSYMEALDIPESEKLAFCFSQWTALPDQEQIPSFVMDLCSSIYNRMKVNEENNHEIYKRFLFQFSRTKDPSLKTGESQIATAEYTKRDSSGIVGRPFFLFRPRNGRKVSINEH</sequence>
<protein>
    <recommendedName>
        <fullName>Neuromedin-S</fullName>
    </recommendedName>
    <component>
        <recommendedName>
            <fullName>Neuromedin-S-17</fullName>
            <shortName>NmS-17</shortName>
        </recommendedName>
    </component>
</protein>
<gene>
    <name type="primary">nms</name>
</gene>
<comment type="function">
    <molecule>Neuromedin-S-17</molecule>
    <text evidence="1">Stimulates uterine smooth muscle contraction (By similarity). Synthetic peptide NmS-17 induces calcium mobilization in CHO cells transfected with either human FM-3/GPR66 (EC(50)=0.085 nM) or FM-4/TGR-1 (EC(50)=0.231 nM) NmU/NmS receptors.</text>
</comment>
<comment type="subcellular location">
    <subcellularLocation>
        <location evidence="3">Secreted</location>
    </subcellularLocation>
</comment>
<comment type="alternative products">
    <event type="alternative splicing"/>
    <isoform>
        <id>Q1HA20-1</id>
        <name>1</name>
        <name>BO1</name>
        <sequence type="displayed"/>
    </isoform>
    <isoform>
        <id>Q1HA20-2</id>
        <name>2</name>
        <name>BO2</name>
        <sequence type="described" ref="VSP_043616"/>
    </isoform>
    <isoform>
        <id>Q1HA20-3</id>
        <name>3</name>
        <name>BO3</name>
        <sequence type="described" ref="VSP_043617"/>
    </isoform>
    <isoform>
        <id>Q1HA20-4</id>
        <name>4</name>
        <name>BO4</name>
        <sequence type="described" ref="VSP_043618"/>
    </isoform>
    <isoform>
        <id>Q1HA20-5</id>
        <name>5</name>
        <name>BO5</name>
        <sequence type="described" ref="VSP_043614 VSP_043615"/>
    </isoform>
    <isoform>
        <id>Q1HA20-6</id>
        <name>6</name>
        <name>BO6</name>
        <sequence type="described" ref="VSP_043619"/>
    </isoform>
</comment>
<comment type="tissue specificity">
    <text evidence="3">Expressed by the skin glands.</text>
</comment>
<comment type="mass spectrometry">
    <text>Non-protonated fragment.</text>
</comment>
<comment type="mass spectrometry">
    <molecule>Isoform 6</molecule>
    <text>The measured mass is of the active peptide NmS-33 generated only from isoform 6. Non-protonated fragment. The measured range is 92-124.</text>
</comment>
<comment type="miscellaneous">
    <text>Isoform 6 encodes peptide NmS-33, at positions 92 to 124, as a result of splicing out of an exon that encodes a processing site which generates NmS-17. Similar 33-mers and 36-mers have been isolated from human and from mouse and rat, respectively, although they do not arise by alternative splicing.</text>
</comment>
<comment type="miscellaneous">
    <molecule>Isoform 6</molecule>
    <text evidence="5">Contains an active peptide, NmS-33, at positions 92-124.</text>
</comment>
<comment type="similarity">
    <text evidence="5">Belongs to the NmU family.</text>
</comment>
<feature type="signal peptide" evidence="2">
    <location>
        <begin position="1"/>
        <end position="27"/>
    </location>
</feature>
<feature type="propeptide" id="PRO_0000417373">
    <location>
        <begin position="28"/>
        <end position="89"/>
    </location>
</feature>
<feature type="propeptide" id="PRO_0000417374">
    <location>
        <begin position="92"/>
        <end position="117"/>
    </location>
</feature>
<feature type="peptide" id="PRO_5000076891" description="Neuromedin-S-17">
    <location>
        <begin position="120"/>
        <end position="136"/>
    </location>
</feature>
<feature type="propeptide" id="PRO_0000417375">
    <location>
        <begin position="140"/>
        <end position="145"/>
    </location>
</feature>
<feature type="modified residue" description="Asparagine amide" evidence="3">
    <location>
        <position position="136"/>
    </location>
</feature>
<feature type="splice variant" id="VSP_043614" description="In isoform 5." evidence="4">
    <location>
        <begin position="46"/>
        <end position="62"/>
    </location>
</feature>
<feature type="splice variant" id="VSP_043615" description="In isoform 5." evidence="4">
    <location>
        <begin position="83"/>
        <end position="119"/>
    </location>
</feature>
<feature type="splice variant" id="VSP_043616" description="In isoform 2." evidence="4">
    <location>
        <begin position="83"/>
        <end position="91"/>
    </location>
</feature>
<feature type="splice variant" id="VSP_043617" description="In isoform 3." evidence="4">
    <location>
        <begin position="84"/>
        <end position="108"/>
    </location>
</feature>
<feature type="splice variant" id="VSP_043618" description="In isoform 4." evidence="4">
    <location>
        <begin position="92"/>
        <end position="119"/>
    </location>
</feature>
<feature type="splice variant" id="VSP_043619" description="In isoform 6." evidence="4">
    <location>
        <begin position="108"/>
        <end position="119"/>
    </location>
</feature>
<dbReference type="EMBL" id="AM115665">
    <property type="protein sequence ID" value="CAJ40976.1"/>
    <property type="molecule type" value="mRNA"/>
</dbReference>
<dbReference type="EMBL" id="AM115666">
    <property type="protein sequence ID" value="CAJ40977.1"/>
    <property type="molecule type" value="mRNA"/>
</dbReference>
<dbReference type="EMBL" id="AM115667">
    <property type="protein sequence ID" value="CAJ40978.1"/>
    <property type="molecule type" value="mRNA"/>
</dbReference>
<dbReference type="EMBL" id="AM115668">
    <property type="protein sequence ID" value="CAJ40979.1"/>
    <property type="molecule type" value="mRNA"/>
</dbReference>
<dbReference type="EMBL" id="AM115669">
    <property type="protein sequence ID" value="CAJ40980.1"/>
    <property type="molecule type" value="mRNA"/>
</dbReference>
<dbReference type="EMBL" id="AM115670">
    <property type="protein sequence ID" value="CAJ40981.1"/>
    <property type="molecule type" value="mRNA"/>
</dbReference>
<dbReference type="GO" id="GO:0005576">
    <property type="term" value="C:extracellular region"/>
    <property type="evidence" value="ECO:0007669"/>
    <property type="project" value="UniProtKB-SubCell"/>
</dbReference>
<dbReference type="InterPro" id="IPR018070">
    <property type="entry name" value="Neuromedin-U_amidation-site"/>
</dbReference>
<dbReference type="InterPro" id="IPR043253">
    <property type="entry name" value="NmS"/>
</dbReference>
<dbReference type="PANTHER" id="PTHR32414">
    <property type="entry name" value="NEUROMEDIN-S"/>
    <property type="match status" value="1"/>
</dbReference>
<dbReference type="PANTHER" id="PTHR32414:SF2">
    <property type="entry name" value="NEUROMEDIN-S"/>
    <property type="match status" value="1"/>
</dbReference>
<dbReference type="PROSITE" id="PS00967">
    <property type="entry name" value="NMU"/>
    <property type="match status" value="1"/>
</dbReference>
<reference key="1">
    <citation type="journal article" date="2006" name="Biochem. Biophys. Res. Commun.">
        <title>Structural and functional analogs of the novel mammalian neuropeptide, neuromedin S (NmS), in the dermal venoms of Eurasian bombinid toads.</title>
        <authorList>
            <person name="Chen T."/>
            <person name="Zhou M."/>
            <person name="Walker B."/>
            <person name="Harriot P."/>
            <person name="Mori K."/>
            <person name="Miyazato M."/>
            <person name="Kangawa K."/>
            <person name="Shaw C."/>
        </authorList>
    </citation>
    <scope>NUCLEOTIDE SEQUENCE [MRNA] (ISOFORMS 1; 2; 3; 4; 5 AND 6)</scope>
    <scope>PROTEIN SEQUENCE OF 92-134 AND 120-136</scope>
    <scope>SUBCELLULAR LOCATION</scope>
    <scope>TISSUE SPECIFICITY</scope>
    <scope>MASS SPECTROMETRY</scope>
    <scope>AMIDATION AT ASN-136</scope>
    <source>
        <tissue>Skin secretion</tissue>
    </source>
</reference>
<keyword id="KW-0025">Alternative splicing</keyword>
<keyword id="KW-0027">Amidation</keyword>
<keyword id="KW-0903">Direct protein sequencing</keyword>
<keyword id="KW-0964">Secreted</keyword>
<keyword id="KW-0732">Signal</keyword>
<proteinExistence type="evidence at protein level"/>
<evidence type="ECO:0000250" key="1"/>
<evidence type="ECO:0000255" key="2"/>
<evidence type="ECO:0000269" key="3">
    <source>
    </source>
</evidence>
<evidence type="ECO:0000303" key="4">
    <source>
    </source>
</evidence>
<evidence type="ECO:0000305" key="5"/>
<accession>Q1HA20</accession>
<accession>Q1HA15</accession>
<accession>Q1HA16</accession>
<accession>Q1HA17</accession>
<accession>Q1HA18</accession>
<accession>Q1HA19</accession>
<name>NMS_BOMOR</name>
<organism>
    <name type="scientific">Bombina orientalis</name>
    <name type="common">Oriental fire-bellied toad</name>
    <dbReference type="NCBI Taxonomy" id="8346"/>
    <lineage>
        <taxon>Eukaryota</taxon>
        <taxon>Metazoa</taxon>
        <taxon>Chordata</taxon>
        <taxon>Craniata</taxon>
        <taxon>Vertebrata</taxon>
        <taxon>Euteleostomi</taxon>
        <taxon>Amphibia</taxon>
        <taxon>Batrachia</taxon>
        <taxon>Anura</taxon>
        <taxon>Bombinatoridae</taxon>
        <taxon>Bombina</taxon>
    </lineage>
</organism>